<feature type="chain" id="PRO_0000173957" description="DNA polymerase IV">
    <location>
        <begin position="1"/>
        <end position="365"/>
    </location>
</feature>
<feature type="domain" description="UmuC" evidence="1">
    <location>
        <begin position="14"/>
        <end position="198"/>
    </location>
</feature>
<feature type="active site" evidence="1">
    <location>
        <position position="117"/>
    </location>
</feature>
<feature type="binding site" evidence="1">
    <location>
        <position position="18"/>
    </location>
    <ligand>
        <name>Mg(2+)</name>
        <dbReference type="ChEBI" id="CHEBI:18420"/>
    </ligand>
</feature>
<feature type="binding site" evidence="1">
    <location>
        <position position="116"/>
    </location>
    <ligand>
        <name>Mg(2+)</name>
        <dbReference type="ChEBI" id="CHEBI:18420"/>
    </ligand>
</feature>
<feature type="site" description="Substrate discrimination" evidence="1">
    <location>
        <position position="23"/>
    </location>
</feature>
<keyword id="KW-0963">Cytoplasm</keyword>
<keyword id="KW-0227">DNA damage</keyword>
<keyword id="KW-0234">DNA repair</keyword>
<keyword id="KW-0235">DNA replication</keyword>
<keyword id="KW-0238">DNA-binding</keyword>
<keyword id="KW-0239">DNA-directed DNA polymerase</keyword>
<keyword id="KW-0460">Magnesium</keyword>
<keyword id="KW-0479">Metal-binding</keyword>
<keyword id="KW-0515">Mutator protein</keyword>
<keyword id="KW-0548">Nucleotidyltransferase</keyword>
<keyword id="KW-0808">Transferase</keyword>
<organism>
    <name type="scientific">Streptococcus pyogenes serotype M3 (strain ATCC BAA-595 / MGAS315)</name>
    <dbReference type="NCBI Taxonomy" id="198466"/>
    <lineage>
        <taxon>Bacteria</taxon>
        <taxon>Bacillati</taxon>
        <taxon>Bacillota</taxon>
        <taxon>Bacilli</taxon>
        <taxon>Lactobacillales</taxon>
        <taxon>Streptococcaceae</taxon>
        <taxon>Streptococcus</taxon>
    </lineage>
</organism>
<comment type="function">
    <text evidence="1">Poorly processive, error-prone DNA polymerase involved in untargeted mutagenesis. Copies undamaged DNA at stalled replication forks, which arise in vivo from mismatched or misaligned primer ends. These misaligned primers can be extended by PolIV. Exhibits no 3'-5' exonuclease (proofreading) activity. May be involved in translesional synthesis, in conjunction with the beta clamp from PolIII.</text>
</comment>
<comment type="catalytic activity">
    <reaction evidence="1">
        <text>DNA(n) + a 2'-deoxyribonucleoside 5'-triphosphate = DNA(n+1) + diphosphate</text>
        <dbReference type="Rhea" id="RHEA:22508"/>
        <dbReference type="Rhea" id="RHEA-COMP:17339"/>
        <dbReference type="Rhea" id="RHEA-COMP:17340"/>
        <dbReference type="ChEBI" id="CHEBI:33019"/>
        <dbReference type="ChEBI" id="CHEBI:61560"/>
        <dbReference type="ChEBI" id="CHEBI:173112"/>
        <dbReference type="EC" id="2.7.7.7"/>
    </reaction>
</comment>
<comment type="cofactor">
    <cofactor evidence="1">
        <name>Mg(2+)</name>
        <dbReference type="ChEBI" id="CHEBI:18420"/>
    </cofactor>
    <text evidence="1">Binds 2 magnesium ions per subunit.</text>
</comment>
<comment type="subunit">
    <text evidence="1">Monomer.</text>
</comment>
<comment type="subcellular location">
    <subcellularLocation>
        <location evidence="1">Cytoplasm</location>
    </subcellularLocation>
</comment>
<comment type="similarity">
    <text evidence="1">Belongs to the DNA polymerase type-Y family.</text>
</comment>
<reference key="1">
    <citation type="journal article" date="2002" name="Proc. Natl. Acad. Sci. U.S.A.">
        <title>Genome sequence of a serotype M3 strain of group A Streptococcus: phage-encoded toxins, the high-virulence phenotype, and clone emergence.</title>
        <authorList>
            <person name="Beres S.B."/>
            <person name="Sylva G.L."/>
            <person name="Barbian K.D."/>
            <person name="Lei B."/>
            <person name="Hoff J.S."/>
            <person name="Mammarella N.D."/>
            <person name="Liu M.-Y."/>
            <person name="Smoot J.C."/>
            <person name="Porcella S.F."/>
            <person name="Parkins L.D."/>
            <person name="Campbell D.S."/>
            <person name="Smith T.M."/>
            <person name="McCormick J.K."/>
            <person name="Leung D.Y.M."/>
            <person name="Schlievert P.M."/>
            <person name="Musser J.M."/>
        </authorList>
    </citation>
    <scope>NUCLEOTIDE SEQUENCE [LARGE SCALE GENOMIC DNA]</scope>
    <source>
        <strain>ATCC BAA-595 / MGAS315</strain>
    </source>
</reference>
<gene>
    <name evidence="1" type="primary">dinB</name>
    <name type="synonym">dinP</name>
    <name type="ordered locus">SpyM3_1595</name>
</gene>
<evidence type="ECO:0000255" key="1">
    <source>
        <dbReference type="HAMAP-Rule" id="MF_01113"/>
    </source>
</evidence>
<proteinExistence type="inferred from homology"/>
<dbReference type="EC" id="2.7.7.7" evidence="1"/>
<dbReference type="EMBL" id="AE014074">
    <property type="protein sequence ID" value="AAM80202.1"/>
    <property type="molecule type" value="Genomic_DNA"/>
</dbReference>
<dbReference type="RefSeq" id="WP_011054974.1">
    <property type="nucleotide sequence ID" value="NC_004070.1"/>
</dbReference>
<dbReference type="SMR" id="P0DA78"/>
<dbReference type="KEGG" id="spg:SpyM3_1595"/>
<dbReference type="HOGENOM" id="CLU_012348_1_2_9"/>
<dbReference type="Proteomes" id="UP000000564">
    <property type="component" value="Chromosome"/>
</dbReference>
<dbReference type="GO" id="GO:0005829">
    <property type="term" value="C:cytosol"/>
    <property type="evidence" value="ECO:0007669"/>
    <property type="project" value="TreeGrafter"/>
</dbReference>
<dbReference type="GO" id="GO:0003684">
    <property type="term" value="F:damaged DNA binding"/>
    <property type="evidence" value="ECO:0007669"/>
    <property type="project" value="InterPro"/>
</dbReference>
<dbReference type="GO" id="GO:0003887">
    <property type="term" value="F:DNA-directed DNA polymerase activity"/>
    <property type="evidence" value="ECO:0007669"/>
    <property type="project" value="UniProtKB-UniRule"/>
</dbReference>
<dbReference type="GO" id="GO:0000287">
    <property type="term" value="F:magnesium ion binding"/>
    <property type="evidence" value="ECO:0007669"/>
    <property type="project" value="UniProtKB-UniRule"/>
</dbReference>
<dbReference type="GO" id="GO:0006261">
    <property type="term" value="P:DNA-templated DNA replication"/>
    <property type="evidence" value="ECO:0007669"/>
    <property type="project" value="UniProtKB-UniRule"/>
</dbReference>
<dbReference type="GO" id="GO:0042276">
    <property type="term" value="P:error-prone translesion synthesis"/>
    <property type="evidence" value="ECO:0007669"/>
    <property type="project" value="TreeGrafter"/>
</dbReference>
<dbReference type="GO" id="GO:0009432">
    <property type="term" value="P:SOS response"/>
    <property type="evidence" value="ECO:0007669"/>
    <property type="project" value="TreeGrafter"/>
</dbReference>
<dbReference type="CDD" id="cd03586">
    <property type="entry name" value="PolY_Pol_IV_kappa"/>
    <property type="match status" value="1"/>
</dbReference>
<dbReference type="FunFam" id="3.30.1490.100:FF:000004">
    <property type="entry name" value="DNA polymerase IV"/>
    <property type="match status" value="1"/>
</dbReference>
<dbReference type="FunFam" id="3.40.1170.60:FF:000001">
    <property type="entry name" value="DNA polymerase IV"/>
    <property type="match status" value="1"/>
</dbReference>
<dbReference type="Gene3D" id="3.30.70.270">
    <property type="match status" value="1"/>
</dbReference>
<dbReference type="Gene3D" id="3.40.1170.60">
    <property type="match status" value="1"/>
</dbReference>
<dbReference type="Gene3D" id="1.10.150.20">
    <property type="entry name" value="5' to 3' exonuclease, C-terminal subdomain"/>
    <property type="match status" value="1"/>
</dbReference>
<dbReference type="Gene3D" id="3.30.1490.100">
    <property type="entry name" value="DNA polymerase, Y-family, little finger domain"/>
    <property type="match status" value="1"/>
</dbReference>
<dbReference type="HAMAP" id="MF_01113">
    <property type="entry name" value="DNApol_IV"/>
    <property type="match status" value="1"/>
</dbReference>
<dbReference type="InterPro" id="IPR043502">
    <property type="entry name" value="DNA/RNA_pol_sf"/>
</dbReference>
<dbReference type="InterPro" id="IPR036775">
    <property type="entry name" value="DNA_pol_Y-fam_lit_finger_sf"/>
</dbReference>
<dbReference type="InterPro" id="IPR017961">
    <property type="entry name" value="DNA_pol_Y-fam_little_finger"/>
</dbReference>
<dbReference type="InterPro" id="IPR050116">
    <property type="entry name" value="DNA_polymerase-Y"/>
</dbReference>
<dbReference type="InterPro" id="IPR022880">
    <property type="entry name" value="DNApol_IV"/>
</dbReference>
<dbReference type="InterPro" id="IPR024728">
    <property type="entry name" value="PolY_HhH_motif"/>
</dbReference>
<dbReference type="InterPro" id="IPR043128">
    <property type="entry name" value="Rev_trsase/Diguanyl_cyclase"/>
</dbReference>
<dbReference type="InterPro" id="IPR001126">
    <property type="entry name" value="UmuC"/>
</dbReference>
<dbReference type="NCBIfam" id="NF002677">
    <property type="entry name" value="PRK02406.1"/>
    <property type="match status" value="1"/>
</dbReference>
<dbReference type="PANTHER" id="PTHR11076:SF33">
    <property type="entry name" value="DNA POLYMERASE KAPPA"/>
    <property type="match status" value="1"/>
</dbReference>
<dbReference type="PANTHER" id="PTHR11076">
    <property type="entry name" value="DNA REPAIR POLYMERASE UMUC / TRANSFERASE FAMILY MEMBER"/>
    <property type="match status" value="1"/>
</dbReference>
<dbReference type="Pfam" id="PF00817">
    <property type="entry name" value="IMS"/>
    <property type="match status" value="1"/>
</dbReference>
<dbReference type="Pfam" id="PF11799">
    <property type="entry name" value="IMS_C"/>
    <property type="match status" value="1"/>
</dbReference>
<dbReference type="Pfam" id="PF11798">
    <property type="entry name" value="IMS_HHH"/>
    <property type="match status" value="1"/>
</dbReference>
<dbReference type="SUPFAM" id="SSF56672">
    <property type="entry name" value="DNA/RNA polymerases"/>
    <property type="match status" value="1"/>
</dbReference>
<dbReference type="SUPFAM" id="SSF100879">
    <property type="entry name" value="Lesion bypass DNA polymerase (Y-family), little finger domain"/>
    <property type="match status" value="1"/>
</dbReference>
<dbReference type="PROSITE" id="PS50173">
    <property type="entry name" value="UMUC"/>
    <property type="match status" value="1"/>
</dbReference>
<name>DPO4_STRP3</name>
<sequence length="365" mass="41029">MLIFPLINDTSRKIIHIDMDAFFAAVEERDNPALKGKPVVIGKDPRETGGRGVVSTCNYEARKYGIHSAMSSKEAYERCPKAIFISGNYEKYRTVGDQIRRIFKRYTDVVEPMSIDEAYLDVTDNKLGIKSAVKIAKLIQHDIWKEVGLTCSAGVSYNKFLAKLASDFEKPHGLTLVLKEDALCFLAKLPIEKFHGVGKKSVEKLHDMGIYTGQDLLAVPEMTLIDHFGRFGFDLYRKARGISNSPVKSDRIRKSIGSERTYAKLLYQETDIKAEISKNAKRVVALLQDHKKLGKTIVLKVRYADFITLTKRVTLPELTRDAAQIEQVAESIFDTLPEHTVGIRLLGVTMTNLEDKMADIALDLS</sequence>
<accession>P0DA78</accession>
<accession>Q8K5Y2</accession>
<protein>
    <recommendedName>
        <fullName evidence="1">DNA polymerase IV</fullName>
        <shortName evidence="1">Pol IV</shortName>
        <ecNumber evidence="1">2.7.7.7</ecNumber>
    </recommendedName>
</protein>